<proteinExistence type="inferred from homology"/>
<reference key="1">
    <citation type="journal article" date="2013" name="Nat. Commun.">
        <title>The tiger genome and comparative analysis with lion and snow leopard genomes.</title>
        <authorList>
            <person name="Cho Y.S."/>
            <person name="Hu L."/>
            <person name="Hou H."/>
            <person name="Lee H."/>
            <person name="Xu J."/>
            <person name="Kwon S."/>
            <person name="Oh S."/>
            <person name="Kim H.M."/>
            <person name="Jho S."/>
            <person name="Kim S."/>
            <person name="Shin Y.A."/>
            <person name="Kim B.C."/>
            <person name="Kim H."/>
            <person name="Kim C.U."/>
            <person name="Luo S.J."/>
            <person name="Johnson W.E."/>
            <person name="Koepfli K.P."/>
            <person name="Schmidt-Kuntzel A."/>
            <person name="Turner J.A."/>
            <person name="Marker L."/>
            <person name="Harper C."/>
            <person name="Miller S.M."/>
            <person name="Jacobs W."/>
            <person name="Bertola L.D."/>
            <person name="Kim T.H."/>
            <person name="Lee S."/>
            <person name="Zhou Q."/>
            <person name="Jung H.J."/>
            <person name="Xu X."/>
            <person name="Gadhvi P."/>
            <person name="Xu P."/>
            <person name="Xiong Y."/>
            <person name="Luo Y."/>
            <person name="Pan S."/>
            <person name="Gou C."/>
            <person name="Chu X."/>
            <person name="Zhang J."/>
            <person name="Liu S."/>
            <person name="He J."/>
            <person name="Chen Y."/>
            <person name="Yang L."/>
            <person name="Yang Y."/>
            <person name="He J."/>
            <person name="Liu S."/>
            <person name="Wang J."/>
            <person name="Kim C.H."/>
            <person name="Kwak H."/>
            <person name="Kim J.S."/>
            <person name="Hwang S."/>
            <person name="Ko J."/>
            <person name="Kim C.B."/>
            <person name="Kim S."/>
            <person name="Bayarlkhagva D."/>
            <person name="Paek W.K."/>
            <person name="Kim S.J."/>
            <person name="O'Brien S.J."/>
            <person name="Wang J."/>
            <person name="Bhak J."/>
        </authorList>
    </citation>
    <scope>NUCLEOTIDE SEQUENCE [LARGE SCALE GENOMIC DNA]</scope>
</reference>
<reference key="2">
    <citation type="unpublished observations" date="2014-09">
        <authorList>
            <person name="Puppione D.L."/>
        </authorList>
    </citation>
    <scope>IDENTIFICATION</scope>
</reference>
<keyword id="KW-0162">Chylomicron</keyword>
<keyword id="KW-0325">Glycoprotein</keyword>
<keyword id="KW-0442">Lipid degradation</keyword>
<keyword id="KW-0443">Lipid metabolism</keyword>
<keyword id="KW-0445">Lipid transport</keyword>
<keyword id="KW-1185">Reference proteome</keyword>
<keyword id="KW-0964">Secreted</keyword>
<keyword id="KW-0730">Sialic acid</keyword>
<keyword id="KW-0732">Signal</keyword>
<keyword id="KW-0813">Transport</keyword>
<keyword id="KW-0850">VLDL</keyword>
<dbReference type="EMBL" id="ATCQ01045855">
    <property type="status" value="NOT_ANNOTATED_CDS"/>
    <property type="molecule type" value="Genomic_RNA"/>
</dbReference>
<dbReference type="RefSeq" id="XP_015392270.1">
    <property type="nucleotide sequence ID" value="XM_015536784.1"/>
</dbReference>
<dbReference type="RefSeq" id="XP_015392271.1">
    <property type="nucleotide sequence ID" value="XM_015536785.1"/>
</dbReference>
<dbReference type="SMR" id="P0DMP9"/>
<dbReference type="GlyCosmos" id="P0DMP9">
    <property type="glycosylation" value="1 site, No reported glycans"/>
</dbReference>
<dbReference type="Ensembl" id="ENSPTIT00000004544.1">
    <property type="protein sequence ID" value="ENSPTIP00000001596.1"/>
    <property type="gene ID" value="ENSPTIG00000004093.1"/>
</dbReference>
<dbReference type="GeneID" id="102952151"/>
<dbReference type="KEGG" id="ptg:102952151"/>
<dbReference type="CTD" id="345"/>
<dbReference type="GeneTree" id="ENSGT00390000015395"/>
<dbReference type="Proteomes" id="UP000675900">
    <property type="component" value="Unassembled WGS sequence"/>
</dbReference>
<dbReference type="GO" id="GO:0042627">
    <property type="term" value="C:chylomicron"/>
    <property type="evidence" value="ECO:0007669"/>
    <property type="project" value="UniProtKB-KW"/>
</dbReference>
<dbReference type="GO" id="GO:0034363">
    <property type="term" value="C:intermediate-density lipoprotein particle"/>
    <property type="evidence" value="ECO:0007669"/>
    <property type="project" value="Ensembl"/>
</dbReference>
<dbReference type="GO" id="GO:0034366">
    <property type="term" value="C:spherical high-density lipoprotein particle"/>
    <property type="evidence" value="ECO:0007669"/>
    <property type="project" value="Ensembl"/>
</dbReference>
<dbReference type="GO" id="GO:0034361">
    <property type="term" value="C:very-low-density lipoprotein particle"/>
    <property type="evidence" value="ECO:0007669"/>
    <property type="project" value="UniProtKB-KW"/>
</dbReference>
<dbReference type="GO" id="GO:0070653">
    <property type="term" value="F:high-density lipoprotein particle receptor binding"/>
    <property type="evidence" value="ECO:0007669"/>
    <property type="project" value="Ensembl"/>
</dbReference>
<dbReference type="GO" id="GO:0055102">
    <property type="term" value="F:lipase inhibitor activity"/>
    <property type="evidence" value="ECO:0007669"/>
    <property type="project" value="Ensembl"/>
</dbReference>
<dbReference type="GO" id="GO:0005543">
    <property type="term" value="F:phospholipid binding"/>
    <property type="evidence" value="ECO:0007669"/>
    <property type="project" value="Ensembl"/>
</dbReference>
<dbReference type="GO" id="GO:0033344">
    <property type="term" value="P:cholesterol efflux"/>
    <property type="evidence" value="ECO:0007669"/>
    <property type="project" value="Ensembl"/>
</dbReference>
<dbReference type="GO" id="GO:0042632">
    <property type="term" value="P:cholesterol homeostasis"/>
    <property type="evidence" value="ECO:0007669"/>
    <property type="project" value="Ensembl"/>
</dbReference>
<dbReference type="GO" id="GO:0034382">
    <property type="term" value="P:chylomicron remnant clearance"/>
    <property type="evidence" value="ECO:0007669"/>
    <property type="project" value="Ensembl"/>
</dbReference>
<dbReference type="GO" id="GO:0007186">
    <property type="term" value="P:G protein-coupled receptor signaling pathway"/>
    <property type="evidence" value="ECO:0007669"/>
    <property type="project" value="Ensembl"/>
</dbReference>
<dbReference type="GO" id="GO:0034375">
    <property type="term" value="P:high-density lipoprotein particle remodeling"/>
    <property type="evidence" value="ECO:0007669"/>
    <property type="project" value="Ensembl"/>
</dbReference>
<dbReference type="GO" id="GO:0042157">
    <property type="term" value="P:lipoprotein metabolic process"/>
    <property type="evidence" value="ECO:0007669"/>
    <property type="project" value="InterPro"/>
</dbReference>
<dbReference type="GO" id="GO:0060621">
    <property type="term" value="P:negative regulation of cholesterol import"/>
    <property type="evidence" value="ECO:0007669"/>
    <property type="project" value="Ensembl"/>
</dbReference>
<dbReference type="GO" id="GO:0045717">
    <property type="term" value="P:negative regulation of fatty acid biosynthetic process"/>
    <property type="evidence" value="ECO:0007669"/>
    <property type="project" value="Ensembl"/>
</dbReference>
<dbReference type="GO" id="GO:0010987">
    <property type="term" value="P:negative regulation of high-density lipoprotein particle clearance"/>
    <property type="evidence" value="ECO:0007669"/>
    <property type="project" value="Ensembl"/>
</dbReference>
<dbReference type="GO" id="GO:0010989">
    <property type="term" value="P:negative regulation of low-density lipoprotein particle clearance"/>
    <property type="evidence" value="ECO:0007669"/>
    <property type="project" value="Ensembl"/>
</dbReference>
<dbReference type="GO" id="GO:0048261">
    <property type="term" value="P:negative regulation of receptor-mediated endocytosis"/>
    <property type="evidence" value="ECO:0007669"/>
    <property type="project" value="Ensembl"/>
</dbReference>
<dbReference type="GO" id="GO:0010897">
    <property type="term" value="P:negative regulation of triglyceride catabolic process"/>
    <property type="evidence" value="ECO:0007669"/>
    <property type="project" value="Ensembl"/>
</dbReference>
<dbReference type="GO" id="GO:0010916">
    <property type="term" value="P:negative regulation of very-low-density lipoprotein particle clearance"/>
    <property type="evidence" value="ECO:0007669"/>
    <property type="project" value="Ensembl"/>
</dbReference>
<dbReference type="GO" id="GO:0010903">
    <property type="term" value="P:negative regulation of very-low-density lipoprotein particle remodeling"/>
    <property type="evidence" value="ECO:0007669"/>
    <property type="project" value="Ensembl"/>
</dbReference>
<dbReference type="GO" id="GO:0033700">
    <property type="term" value="P:phospholipid efflux"/>
    <property type="evidence" value="ECO:0007669"/>
    <property type="project" value="Ensembl"/>
</dbReference>
<dbReference type="GO" id="GO:0032489">
    <property type="term" value="P:regulation of Cdc42 protein signal transduction"/>
    <property type="evidence" value="ECO:0007669"/>
    <property type="project" value="Ensembl"/>
</dbReference>
<dbReference type="GO" id="GO:0019433">
    <property type="term" value="P:triglyceride catabolic process"/>
    <property type="evidence" value="ECO:0007669"/>
    <property type="project" value="Ensembl"/>
</dbReference>
<dbReference type="GO" id="GO:0070328">
    <property type="term" value="P:triglyceride homeostasis"/>
    <property type="evidence" value="ECO:0007669"/>
    <property type="project" value="Ensembl"/>
</dbReference>
<dbReference type="Gene3D" id="6.10.90.10">
    <property type="entry name" value="Apolipoprotein CIII"/>
    <property type="match status" value="1"/>
</dbReference>
<dbReference type="InterPro" id="IPR008403">
    <property type="entry name" value="Apo-CIII"/>
</dbReference>
<dbReference type="InterPro" id="IPR038195">
    <property type="entry name" value="Apo_CIII_sf"/>
</dbReference>
<dbReference type="PANTHER" id="PTHR14225">
    <property type="entry name" value="APOLIPOPROTEIN C-III"/>
    <property type="match status" value="1"/>
</dbReference>
<dbReference type="PANTHER" id="PTHR14225:SF0">
    <property type="entry name" value="APOLIPOPROTEIN C-III"/>
    <property type="match status" value="1"/>
</dbReference>
<dbReference type="Pfam" id="PF05778">
    <property type="entry name" value="Apo-CIII"/>
    <property type="match status" value="1"/>
</dbReference>
<name>APOC3_PANTA</name>
<accession>P0DMP9</accession>
<gene>
    <name type="primary">APOC3</name>
</gene>
<organism>
    <name type="scientific">Panthera tigris altaica</name>
    <name type="common">Siberian tiger</name>
    <dbReference type="NCBI Taxonomy" id="74533"/>
    <lineage>
        <taxon>Eukaryota</taxon>
        <taxon>Metazoa</taxon>
        <taxon>Chordata</taxon>
        <taxon>Craniata</taxon>
        <taxon>Vertebrata</taxon>
        <taxon>Euteleostomi</taxon>
        <taxon>Mammalia</taxon>
        <taxon>Eutheria</taxon>
        <taxon>Laurasiatheria</taxon>
        <taxon>Carnivora</taxon>
        <taxon>Feliformia</taxon>
        <taxon>Felidae</taxon>
        <taxon>Pantherinae</taxon>
        <taxon>Panthera</taxon>
    </lineage>
</organism>
<protein>
    <recommendedName>
        <fullName>Apolipoprotein C-III</fullName>
        <shortName>Apo-CIII</shortName>
        <shortName>ApoC-III</shortName>
    </recommendedName>
    <alternativeName>
        <fullName>Apolipoprotein C3</fullName>
    </alternativeName>
</protein>
<feature type="signal peptide" evidence="3">
    <location>
        <begin position="1"/>
        <end position="20"/>
    </location>
</feature>
<feature type="chain" id="PRO_0000430846" description="Apolipoprotein C-III">
    <location>
        <begin position="21"/>
        <end position="100"/>
    </location>
</feature>
<feature type="region of interest" description="Lipid-binding" evidence="1">
    <location>
        <begin position="68"/>
        <end position="99"/>
    </location>
</feature>
<feature type="site" description="May interact with the LDL receptor" evidence="2">
    <location>
        <position position="41"/>
    </location>
</feature>
<feature type="glycosylation site" description="O-linked (GalNAc...) threonine" evidence="2">
    <location>
        <position position="94"/>
    </location>
</feature>
<comment type="function">
    <text evidence="2">Component of triglyceride-rich very low density lipoproteins (VLDL) and high density lipoproteins (HDL) in plasma. Plays a multifaceted role in triglyceride homeostasis. Intracellularly, promotes hepatic very low density lipoprotein 1 (VLDL1) assembly and secretion; extracellularly, attenuates hydrolysis and clearance of triglyceride-rich lipoproteins (TRLs). Impairs the lipolysis of TRLs by inhibiting lipoprotein lipase and the hepatic uptake of TRLs by remnant receptors. Formed of several curved helices connected via semiflexible hinges, so that it can wrap tightly around the curved micelle surface and easily adapt to the different diameters of its natural binding partners.</text>
</comment>
<comment type="subcellular location">
    <subcellularLocation>
        <location evidence="2">Secreted</location>
    </subcellularLocation>
</comment>
<comment type="PTM">
    <text evidence="2">The most abundant glycoforms are characterized by an O-linked disaccharide galactose linked to N-acetylgalactosamine (Gal-GalNAc), further modified with up to 3 sialic acid residues. Less abundant glycoforms are characterized by more complex and fucosylated glycan moieties. O-glycosylated on Thr-94 with a core 1 or possibly core 8 glycan.</text>
</comment>
<comment type="similarity">
    <text evidence="4">Belongs to the apolipoprotein C3 family.</text>
</comment>
<evidence type="ECO:0000250" key="1"/>
<evidence type="ECO:0000250" key="2">
    <source>
        <dbReference type="UniProtKB" id="P02656"/>
    </source>
</evidence>
<evidence type="ECO:0000255" key="3"/>
<evidence type="ECO:0000305" key="4"/>
<sequence length="100" mass="10986">MQSRVLLVTALLVLLASARATEGEDPSLLGLMQGYVQHATKTAQDTLTTMREFPVAQQARDWVTGRFSSLKDYWSTLTGKFSGFWDSTFAVTPTPASEAK</sequence>